<keyword id="KW-1185">Reference proteome</keyword>
<reference key="1">
    <citation type="journal article" date="2006" name="Nat. Biotechnol.">
        <title>Genome sequence of the ubiquitous hydrocarbon-degrading marine bacterium Alcanivorax borkumensis.</title>
        <authorList>
            <person name="Schneiker S."/>
            <person name="Martins dos Santos V.A.P."/>
            <person name="Bartels D."/>
            <person name="Bekel T."/>
            <person name="Brecht M."/>
            <person name="Buhrmester J."/>
            <person name="Chernikova T.N."/>
            <person name="Denaro R."/>
            <person name="Ferrer M."/>
            <person name="Gertler C."/>
            <person name="Goesmann A."/>
            <person name="Golyshina O.V."/>
            <person name="Kaminski F."/>
            <person name="Khachane A.N."/>
            <person name="Lang S."/>
            <person name="Linke B."/>
            <person name="McHardy A.C."/>
            <person name="Meyer F."/>
            <person name="Nechitaylo T."/>
            <person name="Puehler A."/>
            <person name="Regenhardt D."/>
            <person name="Rupp O."/>
            <person name="Sabirova J.S."/>
            <person name="Selbitschka W."/>
            <person name="Yakimov M.M."/>
            <person name="Timmis K.N."/>
            <person name="Vorhoelter F.-J."/>
            <person name="Weidner S."/>
            <person name="Kaiser O."/>
            <person name="Golyshin P.N."/>
        </authorList>
    </citation>
    <scope>NUCLEOTIDE SEQUENCE [LARGE SCALE GENOMIC DNA]</scope>
    <source>
        <strain>ATCC 700651 / DSM 11573 / NCIMB 13689 / SK2</strain>
    </source>
</reference>
<organism>
    <name type="scientific">Alcanivorax borkumensis (strain ATCC 700651 / DSM 11573 / NCIMB 13689 / SK2)</name>
    <dbReference type="NCBI Taxonomy" id="393595"/>
    <lineage>
        <taxon>Bacteria</taxon>
        <taxon>Pseudomonadati</taxon>
        <taxon>Pseudomonadota</taxon>
        <taxon>Gammaproteobacteria</taxon>
        <taxon>Oceanospirillales</taxon>
        <taxon>Alcanivoracaceae</taxon>
        <taxon>Alcanivorax</taxon>
    </lineage>
</organism>
<proteinExistence type="inferred from homology"/>
<gene>
    <name evidence="1" type="primary">sfsA</name>
    <name type="ordered locus">ABO_0347</name>
</gene>
<evidence type="ECO:0000255" key="1">
    <source>
        <dbReference type="HAMAP-Rule" id="MF_00095"/>
    </source>
</evidence>
<protein>
    <recommendedName>
        <fullName evidence="1">Sugar fermentation stimulation protein homolog</fullName>
    </recommendedName>
</protein>
<comment type="similarity">
    <text evidence="1">Belongs to the SfsA family.</text>
</comment>
<sequence length="239" mass="26250">MKFDPPLETVTLLRRYKRFMADVVRADGSEITVHCPNTGSMKNCVLGGPQQALISDSGNPKRKYRHTLEALQVAHGHWAGVNTARPNALVEEAVRAGQFPMLDSTSGVEREVKYGDSRFDLALGERADPHTFIEVKNVTLGPGPDDKDDGVIAFPDSVTERGQKHLQTLMDVVASGKRAVLFFCVQHSGATAARPADEIDARYGQLLREAIENGVEVLAWKSEVSAQCFRLKEPLPLDL</sequence>
<name>SFSA_ALCBS</name>
<accession>Q0VSQ3</accession>
<dbReference type="EMBL" id="AM286690">
    <property type="protein sequence ID" value="CAL15795.1"/>
    <property type="molecule type" value="Genomic_DNA"/>
</dbReference>
<dbReference type="RefSeq" id="WP_011587642.1">
    <property type="nucleotide sequence ID" value="NC_008260.1"/>
</dbReference>
<dbReference type="SMR" id="Q0VSQ3"/>
<dbReference type="STRING" id="393595.ABO_0347"/>
<dbReference type="KEGG" id="abo:ABO_0347"/>
<dbReference type="eggNOG" id="COG1489">
    <property type="taxonomic scope" value="Bacteria"/>
</dbReference>
<dbReference type="HOGENOM" id="CLU_052299_2_0_6"/>
<dbReference type="OrthoDB" id="9802365at2"/>
<dbReference type="Proteomes" id="UP000008871">
    <property type="component" value="Chromosome"/>
</dbReference>
<dbReference type="GO" id="GO:0003677">
    <property type="term" value="F:DNA binding"/>
    <property type="evidence" value="ECO:0007669"/>
    <property type="project" value="InterPro"/>
</dbReference>
<dbReference type="CDD" id="cd22359">
    <property type="entry name" value="SfsA-like_bacterial"/>
    <property type="match status" value="1"/>
</dbReference>
<dbReference type="Gene3D" id="2.40.50.580">
    <property type="match status" value="1"/>
</dbReference>
<dbReference type="Gene3D" id="3.40.1350.60">
    <property type="match status" value="1"/>
</dbReference>
<dbReference type="HAMAP" id="MF_00095">
    <property type="entry name" value="SfsA"/>
    <property type="match status" value="1"/>
</dbReference>
<dbReference type="InterPro" id="IPR005224">
    <property type="entry name" value="SfsA"/>
</dbReference>
<dbReference type="InterPro" id="IPR040452">
    <property type="entry name" value="SfsA_C"/>
</dbReference>
<dbReference type="InterPro" id="IPR041465">
    <property type="entry name" value="SfsA_N"/>
</dbReference>
<dbReference type="NCBIfam" id="TIGR00230">
    <property type="entry name" value="sfsA"/>
    <property type="match status" value="1"/>
</dbReference>
<dbReference type="PANTHER" id="PTHR30545">
    <property type="entry name" value="SUGAR FERMENTATION STIMULATION PROTEIN A"/>
    <property type="match status" value="1"/>
</dbReference>
<dbReference type="PANTHER" id="PTHR30545:SF2">
    <property type="entry name" value="SUGAR FERMENTATION STIMULATION PROTEIN A"/>
    <property type="match status" value="1"/>
</dbReference>
<dbReference type="Pfam" id="PF03749">
    <property type="entry name" value="SfsA"/>
    <property type="match status" value="1"/>
</dbReference>
<dbReference type="Pfam" id="PF17746">
    <property type="entry name" value="SfsA_N"/>
    <property type="match status" value="1"/>
</dbReference>
<feature type="chain" id="PRO_1000007966" description="Sugar fermentation stimulation protein homolog">
    <location>
        <begin position="1"/>
        <end position="239"/>
    </location>
</feature>